<accession>A0A0P0VG31</accession>
<accession>B9F3U6</accession>
<accession>Q0E340</accession>
<accession>Q6H7Q3</accession>
<protein>
    <recommendedName>
        <fullName evidence="7">DnaJ protein P58IPK homolog A</fullName>
        <shortName evidence="6">OsP58A</shortName>
    </recommendedName>
    <alternativeName>
        <fullName evidence="7">Chaperone protein dnaJ C16</fullName>
        <shortName evidence="5">OsDjC16</shortName>
    </alternativeName>
</protein>
<gene>
    <name evidence="6" type="primary">P58A</name>
    <name evidence="7" type="synonym">DJC16</name>
    <name evidence="10" type="ordered locus">Os02g0195300</name>
    <name evidence="7" type="ordered locus">LOC_Os02g10180</name>
    <name evidence="9" type="ORF">OJ1225_F07.10</name>
    <name evidence="11" type="ORF">OsJ_05745</name>
</gene>
<organism>
    <name type="scientific">Oryza sativa subsp. japonica</name>
    <name type="common">Rice</name>
    <dbReference type="NCBI Taxonomy" id="39947"/>
    <lineage>
        <taxon>Eukaryota</taxon>
        <taxon>Viridiplantae</taxon>
        <taxon>Streptophyta</taxon>
        <taxon>Embryophyta</taxon>
        <taxon>Tracheophyta</taxon>
        <taxon>Spermatophyta</taxon>
        <taxon>Magnoliopsida</taxon>
        <taxon>Liliopsida</taxon>
        <taxon>Poales</taxon>
        <taxon>Poaceae</taxon>
        <taxon>BOP clade</taxon>
        <taxon>Oryzoideae</taxon>
        <taxon>Oryzeae</taxon>
        <taxon>Oryzinae</taxon>
        <taxon>Oryza</taxon>
        <taxon>Oryza sativa</taxon>
    </lineage>
</organism>
<sequence>MVAMARWPWRVLLPLLLLHSSPVFFVFAQEGQDNDPSTLFKRALEMMNLRKYDGSLGLLNAVLEVEPNHSEAYRQRASVLRHKCRYKEAEGDYSKYLELKPGSSSVEKELSQLLQAQNALESAYGQFESHDFSKVLDYINKIVLVFSPDCLKAKLLKAKALLALKDYSTVISETGFILKEDEDNLDALLLRGRAYYYLADHDVASRHYQKGLRLDPEHSELKKAYFGLKNLVKKTKSAEDNAAKGKLRVSAEDYKASLAMDPDHTSYNVHLYLGLCKVLVKLGRGKEAISSCTEALNIDGELVDALTQRGEAKLLTEDWEGAVQDLKEAAQKSPQDMGIREALMRAEKQLKLSKRKDWYKILGISKTASAAEIKRAYKKLALQWHPDKNVDKREEAENMFREIAAAYEVLGDEDKRVRYDRGEDLDEMNMGGGGGGGFNPFGGGGQQYTFHYDGGFHGGGGFPGGGFPGGFQFNFG</sequence>
<dbReference type="EMBL" id="AP004184">
    <property type="protein sequence ID" value="BAD25246.1"/>
    <property type="status" value="ALT_SEQ"/>
    <property type="molecule type" value="Genomic_DNA"/>
</dbReference>
<dbReference type="EMBL" id="AP008208">
    <property type="protein sequence ID" value="BAF08098.2"/>
    <property type="status" value="ALT_SEQ"/>
    <property type="molecule type" value="Genomic_DNA"/>
</dbReference>
<dbReference type="EMBL" id="AP014958">
    <property type="protein sequence ID" value="BAS77447.1"/>
    <property type="molecule type" value="Genomic_DNA"/>
</dbReference>
<dbReference type="EMBL" id="CM000139">
    <property type="protein sequence ID" value="EEE56498.1"/>
    <property type="status" value="ALT_INIT"/>
    <property type="molecule type" value="Genomic_DNA"/>
</dbReference>
<dbReference type="RefSeq" id="XP_015625609.1">
    <property type="nucleotide sequence ID" value="XM_015770123.1"/>
</dbReference>
<dbReference type="RefSeq" id="XP_015625610.1">
    <property type="nucleotide sequence ID" value="XM_015770124.1"/>
</dbReference>
<dbReference type="SMR" id="A0A0P0VG31"/>
<dbReference type="FunCoup" id="A0A0P0VG31">
    <property type="interactions" value="3216"/>
</dbReference>
<dbReference type="STRING" id="39947.A0A0P0VG31"/>
<dbReference type="PaxDb" id="39947-A0A0P0VG31"/>
<dbReference type="EnsemblPlants" id="Os02t0195300-01">
    <property type="protein sequence ID" value="Os02t0195300-01"/>
    <property type="gene ID" value="Os02g0195300"/>
</dbReference>
<dbReference type="Gramene" id="Os02t0195300-01">
    <property type="protein sequence ID" value="Os02t0195300-01"/>
    <property type="gene ID" value="Os02g0195300"/>
</dbReference>
<dbReference type="KEGG" id="dosa:Os02g0195300"/>
<dbReference type="eggNOG" id="KOG0550">
    <property type="taxonomic scope" value="Eukaryota"/>
</dbReference>
<dbReference type="InParanoid" id="A0A0P0VG31"/>
<dbReference type="OMA" id="KMCLGLD"/>
<dbReference type="OrthoDB" id="10250354at2759"/>
<dbReference type="Proteomes" id="UP000000763">
    <property type="component" value="Chromosome 2"/>
</dbReference>
<dbReference type="Proteomes" id="UP000007752">
    <property type="component" value="Chromosome 2"/>
</dbReference>
<dbReference type="Proteomes" id="UP000059680">
    <property type="component" value="Chromosome 2"/>
</dbReference>
<dbReference type="GO" id="GO:0005788">
    <property type="term" value="C:endoplasmic reticulum lumen"/>
    <property type="evidence" value="ECO:0000314"/>
    <property type="project" value="UniProtKB"/>
</dbReference>
<dbReference type="CDD" id="cd06257">
    <property type="entry name" value="DnaJ"/>
    <property type="match status" value="1"/>
</dbReference>
<dbReference type="FunFam" id="1.25.40.10:FF:000258">
    <property type="entry name" value="DnaJ domain containing protein"/>
    <property type="match status" value="1"/>
</dbReference>
<dbReference type="FunFam" id="1.10.287.110:FF:000055">
    <property type="entry name" value="DnaJ subfamily C member 7"/>
    <property type="match status" value="1"/>
</dbReference>
<dbReference type="Gene3D" id="1.10.287.110">
    <property type="entry name" value="DnaJ domain"/>
    <property type="match status" value="1"/>
</dbReference>
<dbReference type="Gene3D" id="1.25.40.10">
    <property type="entry name" value="Tetratricopeptide repeat domain"/>
    <property type="match status" value="1"/>
</dbReference>
<dbReference type="InterPro" id="IPR001623">
    <property type="entry name" value="DnaJ_domain"/>
</dbReference>
<dbReference type="InterPro" id="IPR018253">
    <property type="entry name" value="DnaJ_domain_CS"/>
</dbReference>
<dbReference type="InterPro" id="IPR036869">
    <property type="entry name" value="J_dom_sf"/>
</dbReference>
<dbReference type="InterPro" id="IPR011990">
    <property type="entry name" value="TPR-like_helical_dom_sf"/>
</dbReference>
<dbReference type="InterPro" id="IPR019734">
    <property type="entry name" value="TPR_rpt"/>
</dbReference>
<dbReference type="PANTHER" id="PTHR45188:SF2">
    <property type="entry name" value="DNAJ HOMOLOG SUBFAMILY C MEMBER 7"/>
    <property type="match status" value="1"/>
</dbReference>
<dbReference type="PANTHER" id="PTHR45188">
    <property type="entry name" value="DNAJ PROTEIN P58IPK HOMOLOG"/>
    <property type="match status" value="1"/>
</dbReference>
<dbReference type="Pfam" id="PF00226">
    <property type="entry name" value="DnaJ"/>
    <property type="match status" value="1"/>
</dbReference>
<dbReference type="Pfam" id="PF13432">
    <property type="entry name" value="TPR_16"/>
    <property type="match status" value="1"/>
</dbReference>
<dbReference type="PRINTS" id="PR00625">
    <property type="entry name" value="JDOMAIN"/>
</dbReference>
<dbReference type="SMART" id="SM00271">
    <property type="entry name" value="DnaJ"/>
    <property type="match status" value="1"/>
</dbReference>
<dbReference type="SMART" id="SM00028">
    <property type="entry name" value="TPR"/>
    <property type="match status" value="5"/>
</dbReference>
<dbReference type="SUPFAM" id="SSF46565">
    <property type="entry name" value="Chaperone J-domain"/>
    <property type="match status" value="1"/>
</dbReference>
<dbReference type="SUPFAM" id="SSF48452">
    <property type="entry name" value="TPR-like"/>
    <property type="match status" value="1"/>
</dbReference>
<dbReference type="PROSITE" id="PS00636">
    <property type="entry name" value="DNAJ_1"/>
    <property type="match status" value="1"/>
</dbReference>
<dbReference type="PROSITE" id="PS50076">
    <property type="entry name" value="DNAJ_2"/>
    <property type="match status" value="1"/>
</dbReference>
<dbReference type="PROSITE" id="PS50005">
    <property type="entry name" value="TPR"/>
    <property type="match status" value="3"/>
</dbReference>
<dbReference type="PROSITE" id="PS50293">
    <property type="entry name" value="TPR_REGION"/>
    <property type="match status" value="1"/>
</dbReference>
<proteinExistence type="evidence at protein level"/>
<keyword id="KW-0143">Chaperone</keyword>
<keyword id="KW-0256">Endoplasmic reticulum</keyword>
<keyword id="KW-1185">Reference proteome</keyword>
<keyword id="KW-0677">Repeat</keyword>
<keyword id="KW-0732">Signal</keyword>
<keyword id="KW-0802">TPR repeat</keyword>
<reference key="1">
    <citation type="journal article" date="2005" name="Nature">
        <title>The map-based sequence of the rice genome.</title>
        <authorList>
            <consortium name="International rice genome sequencing project (IRGSP)"/>
        </authorList>
    </citation>
    <scope>NUCLEOTIDE SEQUENCE [LARGE SCALE GENOMIC DNA]</scope>
    <source>
        <strain>cv. Nipponbare</strain>
    </source>
</reference>
<reference key="2">
    <citation type="journal article" date="2008" name="Nucleic Acids Res.">
        <title>The rice annotation project database (RAP-DB): 2008 update.</title>
        <authorList>
            <consortium name="The rice annotation project (RAP)"/>
        </authorList>
    </citation>
    <scope>GENOME REANNOTATION</scope>
    <source>
        <strain>cv. Nipponbare</strain>
    </source>
</reference>
<reference key="3">
    <citation type="journal article" date="2013" name="Rice">
        <title>Improvement of the Oryza sativa Nipponbare reference genome using next generation sequence and optical map data.</title>
        <authorList>
            <person name="Kawahara Y."/>
            <person name="de la Bastide M."/>
            <person name="Hamilton J.P."/>
            <person name="Kanamori H."/>
            <person name="McCombie W.R."/>
            <person name="Ouyang S."/>
            <person name="Schwartz D.C."/>
            <person name="Tanaka T."/>
            <person name="Wu J."/>
            <person name="Zhou S."/>
            <person name="Childs K.L."/>
            <person name="Davidson R.M."/>
            <person name="Lin H."/>
            <person name="Quesada-Ocampo L."/>
            <person name="Vaillancourt B."/>
            <person name="Sakai H."/>
            <person name="Lee S.S."/>
            <person name="Kim J."/>
            <person name="Numa H."/>
            <person name="Itoh T."/>
            <person name="Buell C.R."/>
            <person name="Matsumoto T."/>
        </authorList>
    </citation>
    <scope>GENOME REANNOTATION</scope>
    <source>
        <strain>cv. Nipponbare</strain>
    </source>
</reference>
<reference key="4">
    <citation type="journal article" date="2005" name="PLoS Biol.">
        <title>The genomes of Oryza sativa: a history of duplications.</title>
        <authorList>
            <person name="Yu J."/>
            <person name="Wang J."/>
            <person name="Lin W."/>
            <person name="Li S."/>
            <person name="Li H."/>
            <person name="Zhou J."/>
            <person name="Ni P."/>
            <person name="Dong W."/>
            <person name="Hu S."/>
            <person name="Zeng C."/>
            <person name="Zhang J."/>
            <person name="Zhang Y."/>
            <person name="Li R."/>
            <person name="Xu Z."/>
            <person name="Li S."/>
            <person name="Li X."/>
            <person name="Zheng H."/>
            <person name="Cong L."/>
            <person name="Lin L."/>
            <person name="Yin J."/>
            <person name="Geng J."/>
            <person name="Li G."/>
            <person name="Shi J."/>
            <person name="Liu J."/>
            <person name="Lv H."/>
            <person name="Li J."/>
            <person name="Wang J."/>
            <person name="Deng Y."/>
            <person name="Ran L."/>
            <person name="Shi X."/>
            <person name="Wang X."/>
            <person name="Wu Q."/>
            <person name="Li C."/>
            <person name="Ren X."/>
            <person name="Wang J."/>
            <person name="Wang X."/>
            <person name="Li D."/>
            <person name="Liu D."/>
            <person name="Zhang X."/>
            <person name="Ji Z."/>
            <person name="Zhao W."/>
            <person name="Sun Y."/>
            <person name="Zhang Z."/>
            <person name="Bao J."/>
            <person name="Han Y."/>
            <person name="Dong L."/>
            <person name="Ji J."/>
            <person name="Chen P."/>
            <person name="Wu S."/>
            <person name="Liu J."/>
            <person name="Xiao Y."/>
            <person name="Bu D."/>
            <person name="Tan J."/>
            <person name="Yang L."/>
            <person name="Ye C."/>
            <person name="Zhang J."/>
            <person name="Xu J."/>
            <person name="Zhou Y."/>
            <person name="Yu Y."/>
            <person name="Zhang B."/>
            <person name="Zhuang S."/>
            <person name="Wei H."/>
            <person name="Liu B."/>
            <person name="Lei M."/>
            <person name="Yu H."/>
            <person name="Li Y."/>
            <person name="Xu H."/>
            <person name="Wei S."/>
            <person name="He X."/>
            <person name="Fang L."/>
            <person name="Zhang Z."/>
            <person name="Zhang Y."/>
            <person name="Huang X."/>
            <person name="Su Z."/>
            <person name="Tong W."/>
            <person name="Li J."/>
            <person name="Tong Z."/>
            <person name="Li S."/>
            <person name="Ye J."/>
            <person name="Wang L."/>
            <person name="Fang L."/>
            <person name="Lei T."/>
            <person name="Chen C.-S."/>
            <person name="Chen H.-C."/>
            <person name="Xu Z."/>
            <person name="Li H."/>
            <person name="Huang H."/>
            <person name="Zhang F."/>
            <person name="Xu H."/>
            <person name="Li N."/>
            <person name="Zhao C."/>
            <person name="Li S."/>
            <person name="Dong L."/>
            <person name="Huang Y."/>
            <person name="Li L."/>
            <person name="Xi Y."/>
            <person name="Qi Q."/>
            <person name="Li W."/>
            <person name="Zhang B."/>
            <person name="Hu W."/>
            <person name="Zhang Y."/>
            <person name="Tian X."/>
            <person name="Jiao Y."/>
            <person name="Liang X."/>
            <person name="Jin J."/>
            <person name="Gao L."/>
            <person name="Zheng W."/>
            <person name="Hao B."/>
            <person name="Liu S.-M."/>
            <person name="Wang W."/>
            <person name="Yuan L."/>
            <person name="Cao M."/>
            <person name="McDermott J."/>
            <person name="Samudrala R."/>
            <person name="Wang J."/>
            <person name="Wong G.K.-S."/>
            <person name="Yang H."/>
        </authorList>
    </citation>
    <scope>NUCLEOTIDE SEQUENCE [LARGE SCALE GENOMIC DNA]</scope>
    <source>
        <strain>cv. Nipponbare</strain>
    </source>
</reference>
<reference key="5">
    <citation type="journal article" date="2013" name="Cell Stress Chaperones">
        <title>Functional relevance of J-protein family of rice (Oryza sativa).</title>
        <authorList>
            <person name="Sarkar N.K."/>
            <person name="Thapar U."/>
            <person name="Kundnani P."/>
            <person name="Panwar P."/>
            <person name="Grover A."/>
        </authorList>
    </citation>
    <scope>GENE FAMILY</scope>
    <scope>NOMENCLATURE</scope>
</reference>
<reference key="6">
    <citation type="journal article" date="2013" name="J. Exp. Bot.">
        <title>Analysis of rice ER-resident J-proteins reveals diversity and functional differentiation of the ER-resident Hsp70 system in plants.</title>
        <authorList>
            <person name="Ohta M."/>
            <person name="Wakasa Y."/>
            <person name="Takahashi H."/>
            <person name="Hayashi S."/>
            <person name="Kudo K."/>
            <person name="Takaiwa F."/>
        </authorList>
    </citation>
    <scope>FUNCTION</scope>
    <scope>INTERACTION WITH BIP1</scope>
    <scope>SUBCELLULAR LOCATION</scope>
</reference>
<feature type="signal peptide" evidence="1">
    <location>
        <begin position="1"/>
        <end position="28"/>
    </location>
</feature>
<feature type="chain" id="PRO_5006056310" description="DnaJ protein P58IPK homolog A">
    <location>
        <begin position="29"/>
        <end position="476"/>
    </location>
</feature>
<feature type="repeat" description="TPR 1" evidence="3">
    <location>
        <begin position="36"/>
        <end position="69"/>
    </location>
</feature>
<feature type="repeat" description="TPR 2" evidence="3">
    <location>
        <begin position="70"/>
        <end position="103"/>
    </location>
</feature>
<feature type="repeat" description="TPR 3" evidence="1">
    <location>
        <begin position="116"/>
        <end position="150"/>
    </location>
</feature>
<feature type="repeat" description="TPR 4" evidence="1">
    <location>
        <begin position="152"/>
        <end position="184"/>
    </location>
</feature>
<feature type="repeat" description="TPR 5" evidence="3">
    <location>
        <begin position="185"/>
        <end position="218"/>
    </location>
</feature>
<feature type="repeat" description="TPR 6" evidence="1">
    <location>
        <begin position="231"/>
        <end position="264"/>
    </location>
</feature>
<feature type="repeat" description="TPR 7" evidence="3">
    <location>
        <begin position="269"/>
        <end position="302"/>
    </location>
</feature>
<feature type="repeat" description="TPR 8" evidence="1">
    <location>
        <begin position="304"/>
        <end position="336"/>
    </location>
</feature>
<feature type="domain" description="J" evidence="2">
    <location>
        <begin position="357"/>
        <end position="423"/>
    </location>
</feature>
<name>DJC16_ORYSJ</name>
<comment type="function">
    <text evidence="8">May play a role in protein folding in the endoplasmic reticulum.</text>
</comment>
<comment type="subunit">
    <text evidence="4">Interacts with BIP1.</text>
</comment>
<comment type="subcellular location">
    <subcellularLocation>
        <location evidence="4">Endoplasmic reticulum lumen</location>
    </subcellularLocation>
    <text evidence="4">Localizes to the endoplasmic reticulum (ER) and to punctae around the ER.</text>
</comment>
<comment type="sequence caution" evidence="7">
    <conflict type="erroneous gene model prediction">
        <sequence resource="EMBL-CDS" id="BAD25246"/>
    </conflict>
</comment>
<comment type="sequence caution" evidence="7">
    <conflict type="erroneous gene model prediction">
        <sequence resource="EMBL-CDS" id="BAF08098"/>
    </conflict>
</comment>
<comment type="sequence caution" evidence="7">
    <conflict type="erroneous initiation">
        <sequence resource="EMBL-CDS" id="EEE56498"/>
    </conflict>
    <text>Truncated N-terminus.</text>
</comment>
<evidence type="ECO:0000255" key="1"/>
<evidence type="ECO:0000255" key="2">
    <source>
        <dbReference type="PROSITE-ProRule" id="PRU00286"/>
    </source>
</evidence>
<evidence type="ECO:0000255" key="3">
    <source>
        <dbReference type="PROSITE-ProRule" id="PRU00339"/>
    </source>
</evidence>
<evidence type="ECO:0000269" key="4">
    <source>
    </source>
</evidence>
<evidence type="ECO:0000303" key="5">
    <source>
    </source>
</evidence>
<evidence type="ECO:0000303" key="6">
    <source>
    </source>
</evidence>
<evidence type="ECO:0000305" key="7"/>
<evidence type="ECO:0000305" key="8">
    <source>
    </source>
</evidence>
<evidence type="ECO:0000312" key="9">
    <source>
        <dbReference type="EMBL" id="BAD25246.1"/>
    </source>
</evidence>
<evidence type="ECO:0000312" key="10">
    <source>
        <dbReference type="EMBL" id="BAS77447.1"/>
    </source>
</evidence>
<evidence type="ECO:0000312" key="11">
    <source>
        <dbReference type="EMBL" id="EEE56498.1"/>
    </source>
</evidence>